<comment type="function">
    <text evidence="1">Negatively regulates transcription of bacterial ribonucleotide reductase nrd genes and operons by binding to NrdR-boxes.</text>
</comment>
<comment type="cofactor">
    <cofactor evidence="1">
        <name>Zn(2+)</name>
        <dbReference type="ChEBI" id="CHEBI:29105"/>
    </cofactor>
    <text evidence="1">Binds 1 zinc ion.</text>
</comment>
<comment type="similarity">
    <text evidence="1">Belongs to the NrdR family.</text>
</comment>
<accession>Q8UG74</accession>
<keyword id="KW-0067">ATP-binding</keyword>
<keyword id="KW-0238">DNA-binding</keyword>
<keyword id="KW-0479">Metal-binding</keyword>
<keyword id="KW-0547">Nucleotide-binding</keyword>
<keyword id="KW-1185">Reference proteome</keyword>
<keyword id="KW-0678">Repressor</keyword>
<keyword id="KW-0804">Transcription</keyword>
<keyword id="KW-0805">Transcription regulation</keyword>
<keyword id="KW-0862">Zinc</keyword>
<keyword id="KW-0863">Zinc-finger</keyword>
<dbReference type="EMBL" id="AE007869">
    <property type="protein sequence ID" value="AAK86970.1"/>
    <property type="molecule type" value="Genomic_DNA"/>
</dbReference>
<dbReference type="PIR" id="A97502">
    <property type="entry name" value="A97502"/>
</dbReference>
<dbReference type="PIR" id="AE2720">
    <property type="entry name" value="AE2720"/>
</dbReference>
<dbReference type="RefSeq" id="NP_354185.1">
    <property type="nucleotide sequence ID" value="NC_003062.2"/>
</dbReference>
<dbReference type="RefSeq" id="WP_003512508.1">
    <property type="nucleotide sequence ID" value="NC_003062.2"/>
</dbReference>
<dbReference type="SMR" id="Q8UG74"/>
<dbReference type="STRING" id="176299.Atu1166"/>
<dbReference type="EnsemblBacteria" id="AAK86970">
    <property type="protein sequence ID" value="AAK86970"/>
    <property type="gene ID" value="Atu1166"/>
</dbReference>
<dbReference type="GeneID" id="92770338"/>
<dbReference type="KEGG" id="atu:Atu1166"/>
<dbReference type="PATRIC" id="fig|176299.10.peg.1187"/>
<dbReference type="eggNOG" id="COG1327">
    <property type="taxonomic scope" value="Bacteria"/>
</dbReference>
<dbReference type="HOGENOM" id="CLU_108412_0_1_5"/>
<dbReference type="OrthoDB" id="9807461at2"/>
<dbReference type="PhylomeDB" id="Q8UG74"/>
<dbReference type="BioCyc" id="AGRO:ATU1166-MONOMER"/>
<dbReference type="Proteomes" id="UP000000813">
    <property type="component" value="Chromosome circular"/>
</dbReference>
<dbReference type="GO" id="GO:0005524">
    <property type="term" value="F:ATP binding"/>
    <property type="evidence" value="ECO:0007669"/>
    <property type="project" value="UniProtKB-KW"/>
</dbReference>
<dbReference type="GO" id="GO:0003677">
    <property type="term" value="F:DNA binding"/>
    <property type="evidence" value="ECO:0007669"/>
    <property type="project" value="UniProtKB-KW"/>
</dbReference>
<dbReference type="GO" id="GO:0008270">
    <property type="term" value="F:zinc ion binding"/>
    <property type="evidence" value="ECO:0007669"/>
    <property type="project" value="UniProtKB-UniRule"/>
</dbReference>
<dbReference type="GO" id="GO:0045892">
    <property type="term" value="P:negative regulation of DNA-templated transcription"/>
    <property type="evidence" value="ECO:0007669"/>
    <property type="project" value="UniProtKB-UniRule"/>
</dbReference>
<dbReference type="HAMAP" id="MF_00440">
    <property type="entry name" value="NrdR"/>
    <property type="match status" value="1"/>
</dbReference>
<dbReference type="InterPro" id="IPR005144">
    <property type="entry name" value="ATP-cone_dom"/>
</dbReference>
<dbReference type="InterPro" id="IPR055173">
    <property type="entry name" value="NrdR-like_N"/>
</dbReference>
<dbReference type="InterPro" id="IPR003796">
    <property type="entry name" value="RNR_NrdR-like"/>
</dbReference>
<dbReference type="NCBIfam" id="TIGR00244">
    <property type="entry name" value="transcriptional regulator NrdR"/>
    <property type="match status" value="1"/>
</dbReference>
<dbReference type="PANTHER" id="PTHR30455">
    <property type="entry name" value="TRANSCRIPTIONAL REPRESSOR NRDR"/>
    <property type="match status" value="1"/>
</dbReference>
<dbReference type="PANTHER" id="PTHR30455:SF2">
    <property type="entry name" value="TRANSCRIPTIONAL REPRESSOR NRDR"/>
    <property type="match status" value="1"/>
</dbReference>
<dbReference type="Pfam" id="PF03477">
    <property type="entry name" value="ATP-cone"/>
    <property type="match status" value="1"/>
</dbReference>
<dbReference type="Pfam" id="PF22811">
    <property type="entry name" value="Zn_ribbon_NrdR"/>
    <property type="match status" value="1"/>
</dbReference>
<dbReference type="PROSITE" id="PS51161">
    <property type="entry name" value="ATP_CONE"/>
    <property type="match status" value="1"/>
</dbReference>
<name>NRDR_AGRFC</name>
<protein>
    <recommendedName>
        <fullName evidence="1">Transcriptional repressor NrdR</fullName>
    </recommendedName>
</protein>
<reference key="1">
    <citation type="journal article" date="2001" name="Science">
        <title>The genome of the natural genetic engineer Agrobacterium tumefaciens C58.</title>
        <authorList>
            <person name="Wood D.W."/>
            <person name="Setubal J.C."/>
            <person name="Kaul R."/>
            <person name="Monks D.E."/>
            <person name="Kitajima J.P."/>
            <person name="Okura V.K."/>
            <person name="Zhou Y."/>
            <person name="Chen L."/>
            <person name="Wood G.E."/>
            <person name="Almeida N.F. Jr."/>
            <person name="Woo L."/>
            <person name="Chen Y."/>
            <person name="Paulsen I.T."/>
            <person name="Eisen J.A."/>
            <person name="Karp P.D."/>
            <person name="Bovee D. Sr."/>
            <person name="Chapman P."/>
            <person name="Clendenning J."/>
            <person name="Deatherage G."/>
            <person name="Gillet W."/>
            <person name="Grant C."/>
            <person name="Kutyavin T."/>
            <person name="Levy R."/>
            <person name="Li M.-J."/>
            <person name="McClelland E."/>
            <person name="Palmieri A."/>
            <person name="Raymond C."/>
            <person name="Rouse G."/>
            <person name="Saenphimmachak C."/>
            <person name="Wu Z."/>
            <person name="Romero P."/>
            <person name="Gordon D."/>
            <person name="Zhang S."/>
            <person name="Yoo H."/>
            <person name="Tao Y."/>
            <person name="Biddle P."/>
            <person name="Jung M."/>
            <person name="Krespan W."/>
            <person name="Perry M."/>
            <person name="Gordon-Kamm B."/>
            <person name="Liao L."/>
            <person name="Kim S."/>
            <person name="Hendrick C."/>
            <person name="Zhao Z.-Y."/>
            <person name="Dolan M."/>
            <person name="Chumley F."/>
            <person name="Tingey S.V."/>
            <person name="Tomb J.-F."/>
            <person name="Gordon M.P."/>
            <person name="Olson M.V."/>
            <person name="Nester E.W."/>
        </authorList>
    </citation>
    <scope>NUCLEOTIDE SEQUENCE [LARGE SCALE GENOMIC DNA]</scope>
    <source>
        <strain>C58 / ATCC 33970</strain>
    </source>
</reference>
<reference key="2">
    <citation type="journal article" date="2001" name="Science">
        <title>Genome sequence of the plant pathogen and biotechnology agent Agrobacterium tumefaciens C58.</title>
        <authorList>
            <person name="Goodner B."/>
            <person name="Hinkle G."/>
            <person name="Gattung S."/>
            <person name="Miller N."/>
            <person name="Blanchard M."/>
            <person name="Qurollo B."/>
            <person name="Goldman B.S."/>
            <person name="Cao Y."/>
            <person name="Askenazi M."/>
            <person name="Halling C."/>
            <person name="Mullin L."/>
            <person name="Houmiel K."/>
            <person name="Gordon J."/>
            <person name="Vaudin M."/>
            <person name="Iartchouk O."/>
            <person name="Epp A."/>
            <person name="Liu F."/>
            <person name="Wollam C."/>
            <person name="Allinger M."/>
            <person name="Doughty D."/>
            <person name="Scott C."/>
            <person name="Lappas C."/>
            <person name="Markelz B."/>
            <person name="Flanagan C."/>
            <person name="Crowell C."/>
            <person name="Gurson J."/>
            <person name="Lomo C."/>
            <person name="Sear C."/>
            <person name="Strub G."/>
            <person name="Cielo C."/>
            <person name="Slater S."/>
        </authorList>
    </citation>
    <scope>NUCLEOTIDE SEQUENCE [LARGE SCALE GENOMIC DNA]</scope>
    <source>
        <strain>C58 / ATCC 33970</strain>
    </source>
</reference>
<feature type="chain" id="PRO_0000182259" description="Transcriptional repressor NrdR">
    <location>
        <begin position="1"/>
        <end position="159"/>
    </location>
</feature>
<feature type="domain" description="ATP-cone" evidence="1">
    <location>
        <begin position="49"/>
        <end position="139"/>
    </location>
</feature>
<feature type="zinc finger region" evidence="1">
    <location>
        <begin position="3"/>
        <end position="34"/>
    </location>
</feature>
<feature type="region of interest" description="Disordered" evidence="2">
    <location>
        <begin position="1"/>
        <end position="22"/>
    </location>
</feature>
<feature type="compositionally biased region" description="Basic and acidic residues" evidence="2">
    <location>
        <begin position="11"/>
        <end position="22"/>
    </location>
</feature>
<gene>
    <name evidence="1" type="primary">nrdR</name>
    <name type="ordered locus">Atu1166</name>
    <name type="ORF">AGR_C_2157</name>
</gene>
<proteinExistence type="inferred from homology"/>
<organism>
    <name type="scientific">Agrobacterium fabrum (strain C58 / ATCC 33970)</name>
    <name type="common">Agrobacterium tumefaciens (strain C58)</name>
    <dbReference type="NCBI Taxonomy" id="176299"/>
    <lineage>
        <taxon>Bacteria</taxon>
        <taxon>Pseudomonadati</taxon>
        <taxon>Pseudomonadota</taxon>
        <taxon>Alphaproteobacteria</taxon>
        <taxon>Hyphomicrobiales</taxon>
        <taxon>Rhizobiaceae</taxon>
        <taxon>Rhizobium/Agrobacterium group</taxon>
        <taxon>Agrobacterium</taxon>
        <taxon>Agrobacterium tumefaciens complex</taxon>
    </lineage>
</organism>
<sequence>MRCPFCGSEDTQVKDSRPAEDNTSIRRRRICPDCGGRFTTYERVQLRELMVIKKSGRKLPFDREKLVRSFEIALRKRPVDRDRIERAVSGIARRLESSGETEIPSEEIGLQVLEALKSLDDVAFVRYASVYRDFSHAEDFENVIAEINAKIARDTDAGA</sequence>
<evidence type="ECO:0000255" key="1">
    <source>
        <dbReference type="HAMAP-Rule" id="MF_00440"/>
    </source>
</evidence>
<evidence type="ECO:0000256" key="2">
    <source>
        <dbReference type="SAM" id="MobiDB-lite"/>
    </source>
</evidence>